<dbReference type="EC" id="2.4.1.221" evidence="2"/>
<dbReference type="EMBL" id="AJ606069">
    <property type="protein sequence ID" value="CAE54304.1"/>
    <property type="molecule type" value="mRNA"/>
</dbReference>
<dbReference type="RefSeq" id="NP_001027930.1">
    <property type="nucleotide sequence ID" value="NM_001032758.1"/>
</dbReference>
<dbReference type="SMR" id="Q70AG8"/>
<dbReference type="FunCoup" id="Q70AG8">
    <property type="interactions" value="167"/>
</dbReference>
<dbReference type="STRING" id="31033.ENSTRUP00000023063"/>
<dbReference type="CAZy" id="GT10">
    <property type="family name" value="Glycosyltransferase Family 10"/>
</dbReference>
<dbReference type="GlyCosmos" id="Q70AG8">
    <property type="glycosylation" value="3 sites, No reported glycans"/>
</dbReference>
<dbReference type="GeneID" id="445970"/>
<dbReference type="KEGG" id="tru:445970"/>
<dbReference type="CTD" id="170384"/>
<dbReference type="eggNOG" id="KOG2619">
    <property type="taxonomic scope" value="Eukaryota"/>
</dbReference>
<dbReference type="InParanoid" id="Q70AG8"/>
<dbReference type="OrthoDB" id="9993460at2759"/>
<dbReference type="BRENDA" id="2.4.1.152">
    <property type="organism ID" value="6209"/>
</dbReference>
<dbReference type="UniPathway" id="UPA00378"/>
<dbReference type="Proteomes" id="UP000005226">
    <property type="component" value="Unplaced"/>
</dbReference>
<dbReference type="GO" id="GO:0005783">
    <property type="term" value="C:endoplasmic reticulum"/>
    <property type="evidence" value="ECO:0000250"/>
    <property type="project" value="UniProtKB"/>
</dbReference>
<dbReference type="GO" id="GO:0005789">
    <property type="term" value="C:endoplasmic reticulum membrane"/>
    <property type="evidence" value="ECO:0007669"/>
    <property type="project" value="UniProtKB-SubCell"/>
</dbReference>
<dbReference type="GO" id="GO:0000139">
    <property type="term" value="C:Golgi membrane"/>
    <property type="evidence" value="ECO:0007669"/>
    <property type="project" value="InterPro"/>
</dbReference>
<dbReference type="GO" id="GO:0046920">
    <property type="term" value="F:alpha-(1-&gt;3)-fucosyltransferase activity"/>
    <property type="evidence" value="ECO:0007669"/>
    <property type="project" value="InterPro"/>
</dbReference>
<dbReference type="GO" id="GO:0046922">
    <property type="term" value="F:peptide-O-fucosyltransferase activity"/>
    <property type="evidence" value="ECO:0000250"/>
    <property type="project" value="UniProtKB"/>
</dbReference>
<dbReference type="GO" id="GO:0050714">
    <property type="term" value="P:positive regulation of protein secretion"/>
    <property type="evidence" value="ECO:0000250"/>
    <property type="project" value="UniProtKB"/>
</dbReference>
<dbReference type="FunFam" id="3.40.50.11660:FF:000002">
    <property type="entry name" value="Alpha-(1,3)-fucosyltransferase"/>
    <property type="match status" value="1"/>
</dbReference>
<dbReference type="Gene3D" id="3.40.50.11660">
    <property type="entry name" value="Glycosyl transferase family 10, C-terminal domain"/>
    <property type="match status" value="1"/>
</dbReference>
<dbReference type="InterPro" id="IPR017176">
    <property type="entry name" value="Alpha-1_3-FUT_met"/>
</dbReference>
<dbReference type="InterPro" id="IPR055270">
    <property type="entry name" value="Glyco_tran_10_C"/>
</dbReference>
<dbReference type="InterPro" id="IPR031481">
    <property type="entry name" value="Glyco_tran_10_N"/>
</dbReference>
<dbReference type="InterPro" id="IPR001503">
    <property type="entry name" value="Glyco_trans_10"/>
</dbReference>
<dbReference type="InterPro" id="IPR038577">
    <property type="entry name" value="GT10-like_C_sf"/>
</dbReference>
<dbReference type="PANTHER" id="PTHR11929">
    <property type="entry name" value="ALPHA- 1,3 -FUCOSYLTRANSFERASE"/>
    <property type="match status" value="1"/>
</dbReference>
<dbReference type="PANTHER" id="PTHR11929:SF198">
    <property type="entry name" value="ALPHA-(1,3)-FUCOSYLTRANSFERASE 11"/>
    <property type="match status" value="1"/>
</dbReference>
<dbReference type="Pfam" id="PF17039">
    <property type="entry name" value="Glyco_tran_10_N"/>
    <property type="match status" value="1"/>
</dbReference>
<dbReference type="Pfam" id="PF00852">
    <property type="entry name" value="Glyco_transf_10"/>
    <property type="match status" value="1"/>
</dbReference>
<dbReference type="PIRSF" id="PIRSF037332">
    <property type="entry name" value="Alpha1_3FUT_met"/>
    <property type="match status" value="1"/>
</dbReference>
<dbReference type="SUPFAM" id="SSF53756">
    <property type="entry name" value="UDP-Glycosyltransferase/glycogen phosphorylase"/>
    <property type="match status" value="1"/>
</dbReference>
<gene>
    <name type="primary">fut11</name>
    <name evidence="2" type="synonym">pofut4</name>
</gene>
<organism>
    <name type="scientific">Takifugu rubripes</name>
    <name type="common">Japanese pufferfish</name>
    <name type="synonym">Fugu rubripes</name>
    <dbReference type="NCBI Taxonomy" id="31033"/>
    <lineage>
        <taxon>Eukaryota</taxon>
        <taxon>Metazoa</taxon>
        <taxon>Chordata</taxon>
        <taxon>Craniata</taxon>
        <taxon>Vertebrata</taxon>
        <taxon>Euteleostomi</taxon>
        <taxon>Actinopterygii</taxon>
        <taxon>Neopterygii</taxon>
        <taxon>Teleostei</taxon>
        <taxon>Neoteleostei</taxon>
        <taxon>Acanthomorphata</taxon>
        <taxon>Eupercaria</taxon>
        <taxon>Tetraodontiformes</taxon>
        <taxon>Tetradontoidea</taxon>
        <taxon>Tetraodontidae</taxon>
        <taxon>Takifugu</taxon>
    </lineage>
</organism>
<reference key="1">
    <citation type="submission" date="2003-11" db="EMBL/GenBank/DDBJ databases">
        <title>Phylogeny of fucosyltransferases.</title>
        <authorList>
            <person name="Martinez-Duncker I."/>
            <person name="Mollicone R."/>
            <person name="Candelier J.-J."/>
            <person name="Oriol R."/>
        </authorList>
    </citation>
    <scope>NUCLEOTIDE SEQUENCE [MRNA]</scope>
</reference>
<evidence type="ECO:0000250" key="1">
    <source>
        <dbReference type="UniProtKB" id="Q11130"/>
    </source>
</evidence>
<evidence type="ECO:0000250" key="2">
    <source>
        <dbReference type="UniProtKB" id="Q495W5"/>
    </source>
</evidence>
<evidence type="ECO:0000255" key="3"/>
<evidence type="ECO:0000305" key="4"/>
<feature type="chain" id="PRO_0000299014" description="GDP-fucose protein O-fucosyltransferase 4">
    <location>
        <begin position="1"/>
        <end position="501"/>
    </location>
</feature>
<feature type="topological domain" description="Cytoplasmic" evidence="3">
    <location>
        <begin position="1"/>
        <end position="10"/>
    </location>
</feature>
<feature type="transmembrane region" description="Helical; Signal-anchor for type II membrane protein" evidence="3">
    <location>
        <begin position="11"/>
        <end position="31"/>
    </location>
</feature>
<feature type="topological domain" description="Lumenal" evidence="3">
    <location>
        <begin position="32"/>
        <end position="501"/>
    </location>
</feature>
<feature type="glycosylation site" description="N-linked (GlcNAc...) asparagine" evidence="3">
    <location>
        <position position="173"/>
    </location>
</feature>
<feature type="glycosylation site" description="N-linked (GlcNAc...) asparagine" evidence="3">
    <location>
        <position position="428"/>
    </location>
</feature>
<feature type="glycosylation site" description="N-linked (GlcNAc...) asparagine" evidence="3">
    <location>
        <position position="478"/>
    </location>
</feature>
<feature type="disulfide bond" evidence="1">
    <location>
        <begin position="396"/>
        <end position="399"/>
    </location>
</feature>
<name>OFUT4_TAKRU</name>
<sequence length="501" mass="57567">MLLQMAGRGKMVPCVCLGLLGVLCWVWVSFASFPDEQLSLGAMDAVERAAFQPQSALSEMEFASIGSYRGPGNLDHRSNKELPILLWWSAGLFPHFPGDTERIDCARSSCLATSNRKVQLYKRTASIIFYGTDFRAYEAPLPRLRHQTWALFHEESPMNNYLLSHGPGIRLFNYTATFRRESDYPLTLQWLPSLEYLLTPVPVPLEEKNRLRREGLAPVLYMQSHCDVPSDRDRYVQELMKYIQVDSYGKCLNNKPLAGNLEDTSTATGEEQTFMSFVARYKFHLALENGLCPDYMTEKLWRPLHQGCVPVYRGSSVVADWMPNERSAIIIDEFPSPQALAEYLLHLDENDDEYRKYLEFKSPKRITNARLLEALERREWGVNDMSKPNYLNGFECYVCDQENARLAAERAHRKAPKTNKPPEWKMANNSHMGCPLPSPGYGQVHHLPADDGWLQTWPQDYWQSLDQAEGLESLIRHNESDPSLLWKHIQNMAVRRARGKN</sequence>
<comment type="function">
    <text evidence="2">Protein O-fucosyltransferase that specifically catalyzes O-fucosylation of serine or threonine residues in EMI domains of target proteins. Attaches fucose through an O-glycosidic linkage. O-fucosylation of EMI domain-containing proteins may be required for facilitating protein folding and secretion.</text>
</comment>
<comment type="catalytic activity">
    <reaction evidence="2">
        <text>L-threonyl-[protein] + GDP-beta-L-fucose = 3-O-(alpha-L-fucosyl)-L-threonyl-[protein] + GDP + H(+)</text>
        <dbReference type="Rhea" id="RHEA:70491"/>
        <dbReference type="Rhea" id="RHEA-COMP:11060"/>
        <dbReference type="Rhea" id="RHEA-COMP:17915"/>
        <dbReference type="ChEBI" id="CHEBI:15378"/>
        <dbReference type="ChEBI" id="CHEBI:30013"/>
        <dbReference type="ChEBI" id="CHEBI:57273"/>
        <dbReference type="ChEBI" id="CHEBI:58189"/>
        <dbReference type="ChEBI" id="CHEBI:189631"/>
        <dbReference type="EC" id="2.4.1.221"/>
    </reaction>
    <physiologicalReaction direction="left-to-right" evidence="2">
        <dbReference type="Rhea" id="RHEA:70492"/>
    </physiologicalReaction>
</comment>
<comment type="catalytic activity">
    <reaction evidence="2">
        <text>L-seryl-[protein] + GDP-beta-L-fucose = 3-O-(alpha-L-fucosyl)-L-seryl-[protein] + GDP + H(+)</text>
        <dbReference type="Rhea" id="RHEA:63644"/>
        <dbReference type="Rhea" id="RHEA-COMP:9863"/>
        <dbReference type="Rhea" id="RHEA-COMP:17914"/>
        <dbReference type="ChEBI" id="CHEBI:15378"/>
        <dbReference type="ChEBI" id="CHEBI:29999"/>
        <dbReference type="ChEBI" id="CHEBI:57273"/>
        <dbReference type="ChEBI" id="CHEBI:58189"/>
        <dbReference type="ChEBI" id="CHEBI:189632"/>
        <dbReference type="EC" id="2.4.1.221"/>
    </reaction>
    <physiologicalReaction direction="left-to-right" evidence="2">
        <dbReference type="Rhea" id="RHEA:63645"/>
    </physiologicalReaction>
</comment>
<comment type="pathway">
    <text evidence="2">Protein modification; protein glycosylation.</text>
</comment>
<comment type="subcellular location">
    <subcellularLocation>
        <location evidence="2">Endoplasmic reticulum membrane</location>
        <topology evidence="3">Single-pass type II membrane protein</topology>
    </subcellularLocation>
</comment>
<comment type="similarity">
    <text evidence="4">Belongs to the glycosyltransferase 10 family.</text>
</comment>
<proteinExistence type="evidence at transcript level"/>
<accession>Q70AG8</accession>
<protein>
    <recommendedName>
        <fullName>GDP-fucose protein O-fucosyltransferase 4</fullName>
        <ecNumber evidence="2">2.4.1.221</ecNumber>
    </recommendedName>
    <alternativeName>
        <fullName>Fucosyltransferase XI</fullName>
        <shortName>Fuc-TXI</shortName>
        <shortName>FucT-XI</shortName>
    </alternativeName>
    <alternativeName>
        <fullName>Galactoside 3-L-fucosyltransferase 11</fullName>
        <shortName>Fucosyltransferase 11</shortName>
    </alternativeName>
</protein>
<keyword id="KW-1015">Disulfide bond</keyword>
<keyword id="KW-0256">Endoplasmic reticulum</keyword>
<keyword id="KW-0325">Glycoprotein</keyword>
<keyword id="KW-0328">Glycosyltransferase</keyword>
<keyword id="KW-0472">Membrane</keyword>
<keyword id="KW-1185">Reference proteome</keyword>
<keyword id="KW-0735">Signal-anchor</keyword>
<keyword id="KW-0808">Transferase</keyword>
<keyword id="KW-0812">Transmembrane</keyword>
<keyword id="KW-1133">Transmembrane helix</keyword>